<geneLocation type="chloroplast"/>
<comment type="function">
    <text evidence="1">Key component of the proton channel; it plays a direct role in the translocation of protons across the membrane.</text>
</comment>
<comment type="subunit">
    <text evidence="1">F-type ATPases have 2 components, CF(1) - the catalytic core - and CF(0) - the membrane proton channel. CF(1) has five subunits: alpha(3), beta(3), gamma(1), delta(1), epsilon(1). CF(0) has four main subunits: a, b, b' and c.</text>
</comment>
<comment type="subcellular location">
    <subcellularLocation>
        <location evidence="1">Plastid</location>
        <location evidence="1">Chloroplast thylakoid membrane</location>
        <topology evidence="1">Multi-pass membrane protein</topology>
    </subcellularLocation>
</comment>
<comment type="similarity">
    <text evidence="1">Belongs to the ATPase A chain family.</text>
</comment>
<protein>
    <recommendedName>
        <fullName evidence="1">ATP synthase subunit a, chloroplastic</fullName>
    </recommendedName>
    <alternativeName>
        <fullName evidence="1">ATP synthase F0 sector subunit a</fullName>
    </alternativeName>
    <alternativeName>
        <fullName evidence="1">F-ATPase subunit IV</fullName>
    </alternativeName>
</protein>
<proteinExistence type="inferred from homology"/>
<keyword id="KW-0066">ATP synthesis</keyword>
<keyword id="KW-0138">CF(0)</keyword>
<keyword id="KW-0150">Chloroplast</keyword>
<keyword id="KW-0375">Hydrogen ion transport</keyword>
<keyword id="KW-0406">Ion transport</keyword>
<keyword id="KW-0472">Membrane</keyword>
<keyword id="KW-0934">Plastid</keyword>
<keyword id="KW-0793">Thylakoid</keyword>
<keyword id="KW-0812">Transmembrane</keyword>
<keyword id="KW-1133">Transmembrane helix</keyword>
<keyword id="KW-0813">Transport</keyword>
<organism>
    <name type="scientific">Morus indica</name>
    <name type="common">Mulberry</name>
    <dbReference type="NCBI Taxonomy" id="248361"/>
    <lineage>
        <taxon>Eukaryota</taxon>
        <taxon>Viridiplantae</taxon>
        <taxon>Streptophyta</taxon>
        <taxon>Embryophyta</taxon>
        <taxon>Tracheophyta</taxon>
        <taxon>Spermatophyta</taxon>
        <taxon>Magnoliopsida</taxon>
        <taxon>eudicotyledons</taxon>
        <taxon>Gunneridae</taxon>
        <taxon>Pentapetalae</taxon>
        <taxon>rosids</taxon>
        <taxon>fabids</taxon>
        <taxon>Rosales</taxon>
        <taxon>Moraceae</taxon>
        <taxon>Moreae</taxon>
        <taxon>Morus</taxon>
    </lineage>
</organism>
<reference key="1">
    <citation type="submission" date="2005-09" db="EMBL/GenBank/DDBJ databases">
        <title>The chloroplast genome of mulberry: structural features and comparative analysis.</title>
        <authorList>
            <person name="Ravi V."/>
            <person name="Khurana J.P."/>
            <person name="Tyagi A.K."/>
            <person name="Khurana P."/>
        </authorList>
    </citation>
    <scope>NUCLEOTIDE SEQUENCE [LARGE SCALE GENOMIC DNA]</scope>
    <source>
        <strain>cv. K2</strain>
    </source>
</reference>
<name>ATPI_MORIN</name>
<dbReference type="EMBL" id="DQ226511">
    <property type="protein sequence ID" value="ABB20946.1"/>
    <property type="molecule type" value="Genomic_DNA"/>
</dbReference>
<dbReference type="RefSeq" id="YP_762249.1">
    <property type="nucleotide sequence ID" value="NC_008359.1"/>
</dbReference>
<dbReference type="SMR" id="Q09X29"/>
<dbReference type="GeneID" id="4290592"/>
<dbReference type="GO" id="GO:0009535">
    <property type="term" value="C:chloroplast thylakoid membrane"/>
    <property type="evidence" value="ECO:0007669"/>
    <property type="project" value="UniProtKB-SubCell"/>
</dbReference>
<dbReference type="GO" id="GO:0005886">
    <property type="term" value="C:plasma membrane"/>
    <property type="evidence" value="ECO:0007669"/>
    <property type="project" value="UniProtKB-UniRule"/>
</dbReference>
<dbReference type="GO" id="GO:0045259">
    <property type="term" value="C:proton-transporting ATP synthase complex"/>
    <property type="evidence" value="ECO:0007669"/>
    <property type="project" value="UniProtKB-KW"/>
</dbReference>
<dbReference type="GO" id="GO:0046933">
    <property type="term" value="F:proton-transporting ATP synthase activity, rotational mechanism"/>
    <property type="evidence" value="ECO:0007669"/>
    <property type="project" value="UniProtKB-UniRule"/>
</dbReference>
<dbReference type="CDD" id="cd00310">
    <property type="entry name" value="ATP-synt_Fo_a_6"/>
    <property type="match status" value="1"/>
</dbReference>
<dbReference type="FunFam" id="1.20.120.220:FF:000001">
    <property type="entry name" value="ATP synthase subunit a, chloroplastic"/>
    <property type="match status" value="1"/>
</dbReference>
<dbReference type="Gene3D" id="1.20.120.220">
    <property type="entry name" value="ATP synthase, F0 complex, subunit A"/>
    <property type="match status" value="1"/>
</dbReference>
<dbReference type="HAMAP" id="MF_01393">
    <property type="entry name" value="ATP_synth_a_bact"/>
    <property type="match status" value="1"/>
</dbReference>
<dbReference type="InterPro" id="IPR045082">
    <property type="entry name" value="ATP_syn_F0_a_bact/chloroplast"/>
</dbReference>
<dbReference type="InterPro" id="IPR000568">
    <property type="entry name" value="ATP_synth_F0_asu"/>
</dbReference>
<dbReference type="InterPro" id="IPR023011">
    <property type="entry name" value="ATP_synth_F0_asu_AS"/>
</dbReference>
<dbReference type="InterPro" id="IPR035908">
    <property type="entry name" value="F0_ATP_A_sf"/>
</dbReference>
<dbReference type="NCBIfam" id="TIGR01131">
    <property type="entry name" value="ATP_synt_6_or_A"/>
    <property type="match status" value="1"/>
</dbReference>
<dbReference type="PANTHER" id="PTHR42823">
    <property type="entry name" value="ATP SYNTHASE SUBUNIT A, CHLOROPLASTIC"/>
    <property type="match status" value="1"/>
</dbReference>
<dbReference type="PANTHER" id="PTHR42823:SF3">
    <property type="entry name" value="ATP SYNTHASE SUBUNIT A, CHLOROPLASTIC"/>
    <property type="match status" value="1"/>
</dbReference>
<dbReference type="Pfam" id="PF00119">
    <property type="entry name" value="ATP-synt_A"/>
    <property type="match status" value="1"/>
</dbReference>
<dbReference type="PRINTS" id="PR00123">
    <property type="entry name" value="ATPASEA"/>
</dbReference>
<dbReference type="SUPFAM" id="SSF81336">
    <property type="entry name" value="F1F0 ATP synthase subunit A"/>
    <property type="match status" value="1"/>
</dbReference>
<dbReference type="PROSITE" id="PS00449">
    <property type="entry name" value="ATPASE_A"/>
    <property type="match status" value="1"/>
</dbReference>
<evidence type="ECO:0000255" key="1">
    <source>
        <dbReference type="HAMAP-Rule" id="MF_01393"/>
    </source>
</evidence>
<gene>
    <name evidence="1" type="primary">atpI</name>
    <name type="ordered locus">MoinCp009</name>
</gene>
<sequence length="247" mass="27157">MNVLLCSINTLKGLYDISGVEVGQHLYWKIGGFQVHAQVLITSWVVIAILLGSSIIAVRNPQTIPTDGQNFFEYVLEFIRDVSRTQIGEEYGPWVPFIGTMFLFIFVSNWSGALLPWKIIQLPHGELAAPTNDINTTVALALLTSVAYFYAGLTKKGLGYFGKYIQPTPILLPINILEDFTKPLSLSFRLFGNILADELVVVVLVSLVPLVVPIPVMFLGLFTSGIQALIFATLAAAYIGESMEGHH</sequence>
<feature type="chain" id="PRO_0000362572" description="ATP synthase subunit a, chloroplastic">
    <location>
        <begin position="1"/>
        <end position="247"/>
    </location>
</feature>
<feature type="transmembrane region" description="Helical" evidence="1">
    <location>
        <begin position="38"/>
        <end position="58"/>
    </location>
</feature>
<feature type="transmembrane region" description="Helical" evidence="1">
    <location>
        <begin position="95"/>
        <end position="115"/>
    </location>
</feature>
<feature type="transmembrane region" description="Helical" evidence="1">
    <location>
        <begin position="134"/>
        <end position="154"/>
    </location>
</feature>
<feature type="transmembrane region" description="Helical" evidence="1">
    <location>
        <begin position="199"/>
        <end position="219"/>
    </location>
</feature>
<feature type="transmembrane region" description="Helical" evidence="1">
    <location>
        <begin position="220"/>
        <end position="240"/>
    </location>
</feature>
<accession>Q09X29</accession>